<dbReference type="EMBL" id="AL356332">
    <property type="protein sequence ID" value="CAB92054.1"/>
    <property type="molecule type" value="Genomic_DNA"/>
</dbReference>
<dbReference type="EMBL" id="CP002688">
    <property type="protein sequence ID" value="AED91497.1"/>
    <property type="molecule type" value="Genomic_DNA"/>
</dbReference>
<dbReference type="EMBL" id="BT010846">
    <property type="protein sequence ID" value="AAR24213.1"/>
    <property type="molecule type" value="mRNA"/>
</dbReference>
<dbReference type="EMBL" id="BT012613">
    <property type="protein sequence ID" value="AAT06432.1"/>
    <property type="molecule type" value="mRNA"/>
</dbReference>
<dbReference type="PIR" id="T50017">
    <property type="entry name" value="T50017"/>
</dbReference>
<dbReference type="RefSeq" id="NP_196575.1">
    <property type="nucleotide sequence ID" value="NM_121051.3"/>
</dbReference>
<dbReference type="SMR" id="Q9LX15"/>
<dbReference type="STRING" id="3702.Q9LX15"/>
<dbReference type="iPTMnet" id="Q9LX15"/>
<dbReference type="PaxDb" id="3702-AT5G10130.1"/>
<dbReference type="ProteomicsDB" id="224208"/>
<dbReference type="EnsemblPlants" id="AT5G10130.1">
    <property type="protein sequence ID" value="AT5G10130.1"/>
    <property type="gene ID" value="AT5G10130"/>
</dbReference>
<dbReference type="GeneID" id="830877"/>
<dbReference type="Gramene" id="AT5G10130.1">
    <property type="protein sequence ID" value="AT5G10130.1"/>
    <property type="gene ID" value="AT5G10130"/>
</dbReference>
<dbReference type="KEGG" id="ath:AT5G10130"/>
<dbReference type="Araport" id="AT5G10130"/>
<dbReference type="TAIR" id="AT5G10130"/>
<dbReference type="eggNOG" id="ENOG502S31U">
    <property type="taxonomic scope" value="Eukaryota"/>
</dbReference>
<dbReference type="HOGENOM" id="CLU_094008_2_0_1"/>
<dbReference type="InParanoid" id="Q9LX15"/>
<dbReference type="OMA" id="MANCRVA"/>
<dbReference type="PhylomeDB" id="Q9LX15"/>
<dbReference type="PRO" id="PR:Q9LX15"/>
<dbReference type="Proteomes" id="UP000006548">
    <property type="component" value="Chromosome 5"/>
</dbReference>
<dbReference type="ExpressionAtlas" id="Q9LX15">
    <property type="expression patterns" value="baseline and differential"/>
</dbReference>
<dbReference type="GO" id="GO:0005615">
    <property type="term" value="C:extracellular space"/>
    <property type="evidence" value="ECO:0007669"/>
    <property type="project" value="InterPro"/>
</dbReference>
<dbReference type="InterPro" id="IPR006040">
    <property type="entry name" value="Allergen_Ole_e_I_CS"/>
</dbReference>
<dbReference type="InterPro" id="IPR006041">
    <property type="entry name" value="Pollen_Ole_e1_allergen"/>
</dbReference>
<dbReference type="PANTHER" id="PTHR31614:SF40">
    <property type="entry name" value="PROTEIN DOWNSTREAM OF FLC"/>
    <property type="match status" value="1"/>
</dbReference>
<dbReference type="PANTHER" id="PTHR31614">
    <property type="entry name" value="PROTEIN DOWNSTREAM OF FLC-RELATED"/>
    <property type="match status" value="1"/>
</dbReference>
<dbReference type="Pfam" id="PF01190">
    <property type="entry name" value="Pollen_Ole_e_1"/>
    <property type="match status" value="1"/>
</dbReference>
<dbReference type="PROSITE" id="PS00925">
    <property type="entry name" value="OLEEI"/>
    <property type="match status" value="1"/>
</dbReference>
<evidence type="ECO:0000250" key="1"/>
<evidence type="ECO:0000255" key="2"/>
<evidence type="ECO:0000269" key="3">
    <source>
    </source>
</evidence>
<evidence type="ECO:0000269" key="4">
    <source>
    </source>
</evidence>
<evidence type="ECO:0000305" key="5"/>
<protein>
    <recommendedName>
        <fullName>Protein DOWNSTREAM OF FLC</fullName>
        <shortName>AtDFC</shortName>
    </recommendedName>
    <alternativeName>
        <fullName>Pollen allergen-like protein</fullName>
    </alternativeName>
</protein>
<comment type="function">
    <text evidence="3 4">Part of a three-gene cluster containing FLC, UFC and DFC, which is coordinately regulated in response to vernalization. Not regulated by FLX.</text>
</comment>
<comment type="subcellular location">
    <subcellularLocation>
        <location evidence="5">Secreted</location>
    </subcellularLocation>
</comment>
<comment type="induction">
    <text evidence="3">Epigenetically down-regulated by vernalization.</text>
</comment>
<comment type="similarity">
    <text evidence="5">Belongs to the Ole e I family.</text>
</comment>
<gene>
    <name type="primary">DFC</name>
    <name type="ordered locus">At5g10130</name>
    <name type="ORF">T31P16.120</name>
</gene>
<name>DFC_ARATH</name>
<keyword id="KW-1015">Disulfide bond</keyword>
<keyword id="KW-1185">Reference proteome</keyword>
<keyword id="KW-0964">Secreted</keyword>
<keyword id="KW-0732">Signal</keyword>
<sequence length="164" mass="17819">MAKSFVPLIAVLCVLVLPLAAMAVGTPFHIEGSVYCDTCRFGFETIATQYIRGARVRIVCKDRVTLKSELVGVAVTGPDGKYKVAVRGDRQDQQCLAELVHSPLSRCQEADPGRSTATVILTRSNGAASTRHYANAMGFFRDEPLRGCAALRKRYLADGDNRAI</sequence>
<organism>
    <name type="scientific">Arabidopsis thaliana</name>
    <name type="common">Mouse-ear cress</name>
    <dbReference type="NCBI Taxonomy" id="3702"/>
    <lineage>
        <taxon>Eukaryota</taxon>
        <taxon>Viridiplantae</taxon>
        <taxon>Streptophyta</taxon>
        <taxon>Embryophyta</taxon>
        <taxon>Tracheophyta</taxon>
        <taxon>Spermatophyta</taxon>
        <taxon>Magnoliopsida</taxon>
        <taxon>eudicotyledons</taxon>
        <taxon>Gunneridae</taxon>
        <taxon>Pentapetalae</taxon>
        <taxon>rosids</taxon>
        <taxon>malvids</taxon>
        <taxon>Brassicales</taxon>
        <taxon>Brassicaceae</taxon>
        <taxon>Camelineae</taxon>
        <taxon>Arabidopsis</taxon>
    </lineage>
</organism>
<feature type="signal peptide" evidence="2">
    <location>
        <begin position="1"/>
        <end position="23"/>
    </location>
</feature>
<feature type="chain" id="PRO_0000423723" description="Protein DOWNSTREAM OF FLC">
    <location>
        <begin position="24"/>
        <end position="164"/>
    </location>
</feature>
<feature type="disulfide bond" evidence="1">
    <location>
        <begin position="36"/>
        <end position="107"/>
    </location>
</feature>
<feature type="disulfide bond" evidence="1">
    <location>
        <begin position="39"/>
        <end position="148"/>
    </location>
</feature>
<feature type="disulfide bond" evidence="1">
    <location>
        <begin position="60"/>
        <end position="95"/>
    </location>
</feature>
<accession>Q9LX15</accession>
<proteinExistence type="evidence at transcript level"/>
<reference key="1">
    <citation type="journal article" date="2000" name="Nature">
        <title>Sequence and analysis of chromosome 5 of the plant Arabidopsis thaliana.</title>
        <authorList>
            <person name="Tabata S."/>
            <person name="Kaneko T."/>
            <person name="Nakamura Y."/>
            <person name="Kotani H."/>
            <person name="Kato T."/>
            <person name="Asamizu E."/>
            <person name="Miyajima N."/>
            <person name="Sasamoto S."/>
            <person name="Kimura T."/>
            <person name="Hosouchi T."/>
            <person name="Kawashima K."/>
            <person name="Kohara M."/>
            <person name="Matsumoto M."/>
            <person name="Matsuno A."/>
            <person name="Muraki A."/>
            <person name="Nakayama S."/>
            <person name="Nakazaki N."/>
            <person name="Naruo K."/>
            <person name="Okumura S."/>
            <person name="Shinpo S."/>
            <person name="Takeuchi C."/>
            <person name="Wada T."/>
            <person name="Watanabe A."/>
            <person name="Yamada M."/>
            <person name="Yasuda M."/>
            <person name="Sato S."/>
            <person name="de la Bastide M."/>
            <person name="Huang E."/>
            <person name="Spiegel L."/>
            <person name="Gnoj L."/>
            <person name="O'Shaughnessy A."/>
            <person name="Preston R."/>
            <person name="Habermann K."/>
            <person name="Murray J."/>
            <person name="Johnson D."/>
            <person name="Rohlfing T."/>
            <person name="Nelson J."/>
            <person name="Stoneking T."/>
            <person name="Pepin K."/>
            <person name="Spieth J."/>
            <person name="Sekhon M."/>
            <person name="Armstrong J."/>
            <person name="Becker M."/>
            <person name="Belter E."/>
            <person name="Cordum H."/>
            <person name="Cordes M."/>
            <person name="Courtney L."/>
            <person name="Courtney W."/>
            <person name="Dante M."/>
            <person name="Du H."/>
            <person name="Edwards J."/>
            <person name="Fryman J."/>
            <person name="Haakensen B."/>
            <person name="Lamar E."/>
            <person name="Latreille P."/>
            <person name="Leonard S."/>
            <person name="Meyer R."/>
            <person name="Mulvaney E."/>
            <person name="Ozersky P."/>
            <person name="Riley A."/>
            <person name="Strowmatt C."/>
            <person name="Wagner-McPherson C."/>
            <person name="Wollam A."/>
            <person name="Yoakum M."/>
            <person name="Bell M."/>
            <person name="Dedhia N."/>
            <person name="Parnell L."/>
            <person name="Shah R."/>
            <person name="Rodriguez M."/>
            <person name="Hoon See L."/>
            <person name="Vil D."/>
            <person name="Baker J."/>
            <person name="Kirchoff K."/>
            <person name="Toth K."/>
            <person name="King L."/>
            <person name="Bahret A."/>
            <person name="Miller B."/>
            <person name="Marra M.A."/>
            <person name="Martienssen R."/>
            <person name="McCombie W.R."/>
            <person name="Wilson R.K."/>
            <person name="Murphy G."/>
            <person name="Bancroft I."/>
            <person name="Volckaert G."/>
            <person name="Wambutt R."/>
            <person name="Duesterhoeft A."/>
            <person name="Stiekema W."/>
            <person name="Pohl T."/>
            <person name="Entian K.-D."/>
            <person name="Terryn N."/>
            <person name="Hartley N."/>
            <person name="Bent E."/>
            <person name="Johnson S."/>
            <person name="Langham S.-A."/>
            <person name="McCullagh B."/>
            <person name="Robben J."/>
            <person name="Grymonprez B."/>
            <person name="Zimmermann W."/>
            <person name="Ramsperger U."/>
            <person name="Wedler H."/>
            <person name="Balke K."/>
            <person name="Wedler E."/>
            <person name="Peters S."/>
            <person name="van Staveren M."/>
            <person name="Dirkse W."/>
            <person name="Mooijman P."/>
            <person name="Klein Lankhorst R."/>
            <person name="Weitzenegger T."/>
            <person name="Bothe G."/>
            <person name="Rose M."/>
            <person name="Hauf J."/>
            <person name="Berneiser S."/>
            <person name="Hempel S."/>
            <person name="Feldpausch M."/>
            <person name="Lamberth S."/>
            <person name="Villarroel R."/>
            <person name="Gielen J."/>
            <person name="Ardiles W."/>
            <person name="Bents O."/>
            <person name="Lemcke K."/>
            <person name="Kolesov G."/>
            <person name="Mayer K.F.X."/>
            <person name="Rudd S."/>
            <person name="Schoof H."/>
            <person name="Schueller C."/>
            <person name="Zaccaria P."/>
            <person name="Mewes H.-W."/>
            <person name="Bevan M."/>
            <person name="Fransz P.F."/>
        </authorList>
    </citation>
    <scope>NUCLEOTIDE SEQUENCE [LARGE SCALE GENOMIC DNA]</scope>
    <source>
        <strain>cv. Columbia</strain>
    </source>
</reference>
<reference key="2">
    <citation type="journal article" date="2017" name="Plant J.">
        <title>Araport11: a complete reannotation of the Arabidopsis thaliana reference genome.</title>
        <authorList>
            <person name="Cheng C.Y."/>
            <person name="Krishnakumar V."/>
            <person name="Chan A.P."/>
            <person name="Thibaud-Nissen F."/>
            <person name="Schobel S."/>
            <person name="Town C.D."/>
        </authorList>
    </citation>
    <scope>GENOME REANNOTATION</scope>
    <source>
        <strain>cv. Columbia</strain>
    </source>
</reference>
<reference key="3">
    <citation type="submission" date="2004-05" db="EMBL/GenBank/DDBJ databases">
        <title>Arabidopsis ORF clones.</title>
        <authorList>
            <person name="Cheuk R."/>
            <person name="Chen H."/>
            <person name="Kim C.J."/>
            <person name="Shinn P."/>
            <person name="Ecker J.R."/>
        </authorList>
    </citation>
    <scope>NUCLEOTIDE SEQUENCE [LARGE SCALE MRNA]</scope>
</reference>
<reference key="4">
    <citation type="journal article" date="2004" name="Curr. Biol.">
        <title>A cluster of Arabidopsis genes with a coordinate response to an environmental stimulus.</title>
        <authorList>
            <person name="Finnegan E.J."/>
            <person name="Sheldon C.C."/>
            <person name="Jardinaud F."/>
            <person name="Peacock W.J."/>
            <person name="Dennis E.S."/>
        </authorList>
    </citation>
    <scope>FUNCTION</scope>
    <scope>INDUCTION BY VERNALIZATION</scope>
</reference>
<reference key="5">
    <citation type="journal article" date="2008" name="Plant Cell Physiol.">
        <title>The FLX gene of Arabidopsis is required for FRI-dependent activation of FLC expression.</title>
        <authorList>
            <person name="Andersson C.R."/>
            <person name="Helliwell C.A."/>
            <person name="Bagnall D.J."/>
            <person name="Hughes T.P."/>
            <person name="Finnegan E.J."/>
            <person name="Peacock W.J."/>
            <person name="Dennis E.S."/>
        </authorList>
    </citation>
    <scope>FUNCTION</scope>
</reference>